<sequence length="274" mass="30278">MKKTAIALLAWFVSSASLAATPWQKITHPVPGAAQSIGSFANGCIIGADTLPVQSDNYQVMRTDQRRYFGHPDLVMFIQRLSHQAQQRGLGTVLIGDMGMPAGGRFNGGHASHQTGLDVDIFLQLPKTRWSQAQLLRPQALDLVSRDGKHVVPSRWSSDIASLIKLAAQDNDVTRIFVNPAIKQQLCLDAGNDRDWLRKVRPWFQHRAHMHVRLRCPADSLECEDQPLPPPGDGCGAELQSWFEPPKLGTTKPEKKTPPPLPPSCQALLDEHVL</sequence>
<comment type="function">
    <text evidence="1">Murein endopeptidase that cleaves the D-alanyl-meso-2,6-diamino-pimelyl amide bond that connects peptidoglycan strands. Likely plays a role in the removal of murein from the sacculus.</text>
</comment>
<comment type="cofactor">
    <cofactor evidence="1">
        <name>Zn(2+)</name>
        <dbReference type="ChEBI" id="CHEBI:29105"/>
    </cofactor>
    <text evidence="1">Binds 2 Zn(2+) ions per subunit. Zn(2+) ion 1 is bound in the active site. Zn(2+) ion 2 is bound at the dimer interface by residues from both subunits.</text>
</comment>
<comment type="subunit">
    <text evidence="1">Dimer.</text>
</comment>
<comment type="subcellular location">
    <subcellularLocation>
        <location evidence="1">Periplasm</location>
    </subcellularLocation>
</comment>
<comment type="similarity">
    <text evidence="1">Belongs to the peptidase M74 family.</text>
</comment>
<accession>A9N461</accession>
<proteinExistence type="inferred from homology"/>
<feature type="signal peptide" evidence="1">
    <location>
        <begin position="1"/>
        <end position="19"/>
    </location>
</feature>
<feature type="chain" id="PRO_1000088094" description="Penicillin-insensitive murein endopeptidase">
    <location>
        <begin position="20"/>
        <end position="274"/>
    </location>
</feature>
<feature type="region of interest" description="Disordered" evidence="2">
    <location>
        <begin position="225"/>
        <end position="274"/>
    </location>
</feature>
<feature type="binding site" evidence="1">
    <location>
        <position position="110"/>
    </location>
    <ligand>
        <name>Zn(2+)</name>
        <dbReference type="ChEBI" id="CHEBI:29105"/>
        <label>1</label>
    </ligand>
</feature>
<feature type="binding site" evidence="1">
    <location>
        <position position="113"/>
    </location>
    <ligand>
        <name>Zn(2+)</name>
        <dbReference type="ChEBI" id="CHEBI:29105"/>
        <label>1</label>
    </ligand>
</feature>
<feature type="binding site" evidence="1">
    <location>
        <position position="120"/>
    </location>
    <ligand>
        <name>Zn(2+)</name>
        <dbReference type="ChEBI" id="CHEBI:29105"/>
        <label>1</label>
    </ligand>
</feature>
<feature type="binding site" evidence="1">
    <location>
        <position position="147"/>
    </location>
    <ligand>
        <name>Zn(2+)</name>
        <dbReference type="ChEBI" id="CHEBI:29105"/>
        <label>2</label>
    </ligand>
</feature>
<feature type="binding site" evidence="1">
    <location>
        <position position="150"/>
    </location>
    <ligand>
        <name>Zn(2+)</name>
        <dbReference type="ChEBI" id="CHEBI:29105"/>
        <label>2</label>
    </ligand>
</feature>
<feature type="binding site" evidence="1">
    <location>
        <position position="211"/>
    </location>
    <ligand>
        <name>Zn(2+)</name>
        <dbReference type="ChEBI" id="CHEBI:29105"/>
        <label>1</label>
    </ligand>
</feature>
<feature type="disulfide bond" evidence="1">
    <location>
        <begin position="44"/>
        <end position="265"/>
    </location>
</feature>
<feature type="disulfide bond" evidence="1">
    <location>
        <begin position="187"/>
        <end position="235"/>
    </location>
</feature>
<feature type="disulfide bond" evidence="1">
    <location>
        <begin position="216"/>
        <end position="223"/>
    </location>
</feature>
<name>MEPA_SALPB</name>
<evidence type="ECO:0000255" key="1">
    <source>
        <dbReference type="HAMAP-Rule" id="MF_01623"/>
    </source>
</evidence>
<evidence type="ECO:0000256" key="2">
    <source>
        <dbReference type="SAM" id="MobiDB-lite"/>
    </source>
</evidence>
<reference key="1">
    <citation type="submission" date="2007-11" db="EMBL/GenBank/DDBJ databases">
        <authorList>
            <consortium name="The Salmonella enterica serovar Paratyphi B Genome Sequencing Project"/>
            <person name="McClelland M."/>
            <person name="Sanderson E.K."/>
            <person name="Porwollik S."/>
            <person name="Spieth J."/>
            <person name="Clifton W.S."/>
            <person name="Fulton R."/>
            <person name="Cordes M."/>
            <person name="Wollam A."/>
            <person name="Shah N."/>
            <person name="Pepin K."/>
            <person name="Bhonagiri V."/>
            <person name="Nash W."/>
            <person name="Johnson M."/>
            <person name="Thiruvilangam P."/>
            <person name="Wilson R."/>
        </authorList>
    </citation>
    <scope>NUCLEOTIDE SEQUENCE [LARGE SCALE GENOMIC DNA]</scope>
    <source>
        <strain>ATCC BAA-1250 / SPB7</strain>
    </source>
</reference>
<dbReference type="EC" id="3.4.24.-" evidence="1"/>
<dbReference type="EMBL" id="CP000886">
    <property type="protein sequence ID" value="ABX66013.1"/>
    <property type="molecule type" value="Genomic_DNA"/>
</dbReference>
<dbReference type="RefSeq" id="WP_000750427.1">
    <property type="nucleotide sequence ID" value="NC_010102.1"/>
</dbReference>
<dbReference type="SMR" id="A9N461"/>
<dbReference type="MEROPS" id="M74.001"/>
<dbReference type="KEGG" id="spq:SPAB_00587"/>
<dbReference type="PATRIC" id="fig|1016998.12.peg.548"/>
<dbReference type="HOGENOM" id="CLU_052496_0_0_6"/>
<dbReference type="BioCyc" id="SENT1016998:SPAB_RS02415-MONOMER"/>
<dbReference type="Proteomes" id="UP000008556">
    <property type="component" value="Chromosome"/>
</dbReference>
<dbReference type="GO" id="GO:0030288">
    <property type="term" value="C:outer membrane-bounded periplasmic space"/>
    <property type="evidence" value="ECO:0007669"/>
    <property type="project" value="InterPro"/>
</dbReference>
<dbReference type="GO" id="GO:0046872">
    <property type="term" value="F:metal ion binding"/>
    <property type="evidence" value="ECO:0007669"/>
    <property type="project" value="UniProtKB-KW"/>
</dbReference>
<dbReference type="GO" id="GO:0004222">
    <property type="term" value="F:metalloendopeptidase activity"/>
    <property type="evidence" value="ECO:0007669"/>
    <property type="project" value="UniProtKB-UniRule"/>
</dbReference>
<dbReference type="GO" id="GO:0004252">
    <property type="term" value="F:serine-type endopeptidase activity"/>
    <property type="evidence" value="ECO:0007669"/>
    <property type="project" value="InterPro"/>
</dbReference>
<dbReference type="GO" id="GO:0000270">
    <property type="term" value="P:peptidoglycan metabolic process"/>
    <property type="evidence" value="ECO:0007669"/>
    <property type="project" value="UniProtKB-UniRule"/>
</dbReference>
<dbReference type="GO" id="GO:0006508">
    <property type="term" value="P:proteolysis"/>
    <property type="evidence" value="ECO:0007669"/>
    <property type="project" value="UniProtKB-KW"/>
</dbReference>
<dbReference type="FunFam" id="3.30.1380.10:FF:000002">
    <property type="entry name" value="Penicillin-insensitive murein endopeptidase"/>
    <property type="match status" value="1"/>
</dbReference>
<dbReference type="Gene3D" id="3.30.1380.10">
    <property type="match status" value="1"/>
</dbReference>
<dbReference type="HAMAP" id="MF_01623">
    <property type="entry name" value="MepA"/>
    <property type="match status" value="1"/>
</dbReference>
<dbReference type="InterPro" id="IPR009045">
    <property type="entry name" value="Hedgehog_sig/DD-Pept_Zn-bd_sf"/>
</dbReference>
<dbReference type="InterPro" id="IPR005073">
    <property type="entry name" value="Peptidase_M74"/>
</dbReference>
<dbReference type="NCBIfam" id="NF006947">
    <property type="entry name" value="PRK09429.1"/>
    <property type="match status" value="1"/>
</dbReference>
<dbReference type="Pfam" id="PF03411">
    <property type="entry name" value="Peptidase_M74"/>
    <property type="match status" value="1"/>
</dbReference>
<dbReference type="PIRSF" id="PIRSF018455">
    <property type="entry name" value="MepA"/>
    <property type="match status" value="1"/>
</dbReference>
<dbReference type="SUPFAM" id="SSF55166">
    <property type="entry name" value="Hedgehog/DD-peptidase"/>
    <property type="match status" value="1"/>
</dbReference>
<organism>
    <name type="scientific">Salmonella paratyphi B (strain ATCC BAA-1250 / SPB7)</name>
    <dbReference type="NCBI Taxonomy" id="1016998"/>
    <lineage>
        <taxon>Bacteria</taxon>
        <taxon>Pseudomonadati</taxon>
        <taxon>Pseudomonadota</taxon>
        <taxon>Gammaproteobacteria</taxon>
        <taxon>Enterobacterales</taxon>
        <taxon>Enterobacteriaceae</taxon>
        <taxon>Salmonella</taxon>
    </lineage>
</organism>
<protein>
    <recommendedName>
        <fullName evidence="1">Penicillin-insensitive murein endopeptidase</fullName>
        <ecNumber evidence="1">3.4.24.-</ecNumber>
    </recommendedName>
    <alternativeName>
        <fullName evidence="1">D-alanyl-D-alanine-endopeptidase</fullName>
        <shortName evidence="1">DD-endopeptidase</shortName>
    </alternativeName>
</protein>
<gene>
    <name evidence="1" type="primary">mepA</name>
    <name type="ordered locus">SPAB_00587</name>
</gene>
<keyword id="KW-1015">Disulfide bond</keyword>
<keyword id="KW-0378">Hydrolase</keyword>
<keyword id="KW-0479">Metal-binding</keyword>
<keyword id="KW-0482">Metalloprotease</keyword>
<keyword id="KW-0574">Periplasm</keyword>
<keyword id="KW-0645">Protease</keyword>
<keyword id="KW-0732">Signal</keyword>
<keyword id="KW-0862">Zinc</keyword>